<keyword id="KW-0472">Membrane</keyword>
<keyword id="KW-0496">Mitochondrion</keyword>
<keyword id="KW-0999">Mitochondrion inner membrane</keyword>
<keyword id="KW-0648">Protein biosynthesis</keyword>
<keyword id="KW-1185">Reference proteome</keyword>
<keyword id="KW-0809">Transit peptide</keyword>
<organism>
    <name type="scientific">Saccharomyces cerevisiae (strain ATCC 204508 / S288c)</name>
    <name type="common">Baker's yeast</name>
    <dbReference type="NCBI Taxonomy" id="559292"/>
    <lineage>
        <taxon>Eukaryota</taxon>
        <taxon>Fungi</taxon>
        <taxon>Dikarya</taxon>
        <taxon>Ascomycota</taxon>
        <taxon>Saccharomycotina</taxon>
        <taxon>Saccharomycetes</taxon>
        <taxon>Saccharomycetales</taxon>
        <taxon>Saccharomycetaceae</taxon>
        <taxon>Saccharomyces</taxon>
    </lineage>
</organism>
<dbReference type="EMBL" id="Z48452">
    <property type="protein sequence ID" value="CAA88362.1"/>
    <property type="molecule type" value="Genomic_DNA"/>
</dbReference>
<dbReference type="EMBL" id="X91258">
    <property type="protein sequence ID" value="CAA62658.1"/>
    <property type="molecule type" value="Genomic_DNA"/>
</dbReference>
<dbReference type="EMBL" id="Z73311">
    <property type="protein sequence ID" value="CAA97710.1"/>
    <property type="molecule type" value="Genomic_DNA"/>
</dbReference>
<dbReference type="EMBL" id="U53881">
    <property type="protein sequence ID" value="AAB82401.1"/>
    <property type="molecule type" value="Genomic_DNA"/>
</dbReference>
<dbReference type="EMBL" id="AY692902">
    <property type="protein sequence ID" value="AAT92921.1"/>
    <property type="molecule type" value="Genomic_DNA"/>
</dbReference>
<dbReference type="EMBL" id="BK006945">
    <property type="protein sequence ID" value="DAA09450.1"/>
    <property type="molecule type" value="Genomic_DNA"/>
</dbReference>
<dbReference type="PIR" id="S55593">
    <property type="entry name" value="S55593"/>
</dbReference>
<dbReference type="RefSeq" id="NP_013240.1">
    <property type="nucleotide sequence ID" value="NM_001182026.1"/>
</dbReference>
<dbReference type="BioGRID" id="31408">
    <property type="interactions" value="66"/>
</dbReference>
<dbReference type="FunCoup" id="P42900">
    <property type="interactions" value="71"/>
</dbReference>
<dbReference type="IntAct" id="P42900">
    <property type="interactions" value="2"/>
</dbReference>
<dbReference type="MINT" id="P42900"/>
<dbReference type="STRING" id="4932.YLR139C"/>
<dbReference type="GlyGen" id="P42900">
    <property type="glycosylation" value="1 site"/>
</dbReference>
<dbReference type="PaxDb" id="4932-YLR139C"/>
<dbReference type="PeptideAtlas" id="P42900"/>
<dbReference type="EnsemblFungi" id="YLR139C_mRNA">
    <property type="protein sequence ID" value="YLR139C"/>
    <property type="gene ID" value="YLR139C"/>
</dbReference>
<dbReference type="GeneID" id="850830"/>
<dbReference type="KEGG" id="sce:YLR139C"/>
<dbReference type="AGR" id="SGD:S000004129"/>
<dbReference type="SGD" id="S000004129">
    <property type="gene designation" value="SLS1"/>
</dbReference>
<dbReference type="VEuPathDB" id="FungiDB:YLR139C"/>
<dbReference type="eggNOG" id="ENOG502QUD1">
    <property type="taxonomic scope" value="Eukaryota"/>
</dbReference>
<dbReference type="HOGENOM" id="CLU_390400_0_0_1"/>
<dbReference type="InParanoid" id="P42900"/>
<dbReference type="OMA" id="LWFELDE"/>
<dbReference type="OrthoDB" id="5392646at2759"/>
<dbReference type="BioCyc" id="YEAST:G3O-32279-MONOMER"/>
<dbReference type="BioGRID-ORCS" id="850830">
    <property type="hits" value="4 hits in 10 CRISPR screens"/>
</dbReference>
<dbReference type="PRO" id="PR:P42900"/>
<dbReference type="Proteomes" id="UP000002311">
    <property type="component" value="Chromosome XII"/>
</dbReference>
<dbReference type="RNAct" id="P42900">
    <property type="molecule type" value="protein"/>
</dbReference>
<dbReference type="GO" id="GO:0016020">
    <property type="term" value="C:membrane"/>
    <property type="evidence" value="ECO:0000314"/>
    <property type="project" value="SGD"/>
</dbReference>
<dbReference type="GO" id="GO:0005743">
    <property type="term" value="C:mitochondrial inner membrane"/>
    <property type="evidence" value="ECO:0000314"/>
    <property type="project" value="SGD"/>
</dbReference>
<dbReference type="GO" id="GO:0042645">
    <property type="term" value="C:mitochondrial nucleoid"/>
    <property type="evidence" value="ECO:0000314"/>
    <property type="project" value="SGD"/>
</dbReference>
<dbReference type="GO" id="GO:0005739">
    <property type="term" value="C:mitochondrion"/>
    <property type="evidence" value="ECO:0007005"/>
    <property type="project" value="SGD"/>
</dbReference>
<dbReference type="GO" id="GO:0009060">
    <property type="term" value="P:aerobic respiration"/>
    <property type="evidence" value="ECO:0000315"/>
    <property type="project" value="SGD"/>
</dbReference>
<dbReference type="GO" id="GO:0032543">
    <property type="term" value="P:mitochondrial translation"/>
    <property type="evidence" value="ECO:0000315"/>
    <property type="project" value="SGD"/>
</dbReference>
<dbReference type="GO" id="GO:0070124">
    <property type="term" value="P:mitochondrial translational initiation"/>
    <property type="evidence" value="ECO:0000250"/>
    <property type="project" value="UniProtKB"/>
</dbReference>
<dbReference type="InterPro" id="IPR048401">
    <property type="entry name" value="SLS1_C"/>
</dbReference>
<dbReference type="InterPro" id="IPR032741">
    <property type="entry name" value="Sls1_KH-1"/>
</dbReference>
<dbReference type="InterPro" id="IPR048748">
    <property type="entry name" value="SLS1_KH2"/>
</dbReference>
<dbReference type="InterPro" id="IPR048400">
    <property type="entry name" value="SLS1_N"/>
</dbReference>
<dbReference type="Pfam" id="PF14611">
    <property type="entry name" value="KH_SLS1_1"/>
    <property type="match status" value="1"/>
</dbReference>
<dbReference type="Pfam" id="PF20777">
    <property type="entry name" value="KH_SLS1_2"/>
    <property type="match status" value="1"/>
</dbReference>
<dbReference type="Pfam" id="PF20778">
    <property type="entry name" value="SLS1_C"/>
    <property type="match status" value="1"/>
</dbReference>
<dbReference type="Pfam" id="PF20776">
    <property type="entry name" value="SLS1_N"/>
    <property type="match status" value="1"/>
</dbReference>
<reference key="1">
    <citation type="journal article" date="1996" name="Mol. Gen. Genet.">
        <title>SLS1, a new Saccharomyces cerevisiae gene involved in mitochondrial metabolism, isolated as a syntheticlethal in association with an SSM4 deletion.</title>
        <authorList>
            <person name="Rouillard J.-M."/>
            <person name="Dufour M.-E."/>
            <person name="Theunissen B."/>
            <person name="Mandart E."/>
            <person name="Dujardin G."/>
            <person name="Lacroute F."/>
        </authorList>
    </citation>
    <scope>NUCLEOTIDE SEQUENCE [GENOMIC DNA]</scope>
    <scope>FUNCTION</scope>
    <scope>SUBCELLULAR LOCATION</scope>
</reference>
<reference key="2">
    <citation type="journal article" date="1997" name="Nature">
        <title>The nucleotide sequence of Saccharomyces cerevisiae chromosome XII.</title>
        <authorList>
            <person name="Johnston M."/>
            <person name="Hillier L.W."/>
            <person name="Riles L."/>
            <person name="Albermann K."/>
            <person name="Andre B."/>
            <person name="Ansorge W."/>
            <person name="Benes V."/>
            <person name="Brueckner M."/>
            <person name="Delius H."/>
            <person name="Dubois E."/>
            <person name="Duesterhoeft A."/>
            <person name="Entian K.-D."/>
            <person name="Floeth M."/>
            <person name="Goffeau A."/>
            <person name="Hebling U."/>
            <person name="Heumann K."/>
            <person name="Heuss-Neitzel D."/>
            <person name="Hilbert H."/>
            <person name="Hilger F."/>
            <person name="Kleine K."/>
            <person name="Koetter P."/>
            <person name="Louis E.J."/>
            <person name="Messenguy F."/>
            <person name="Mewes H.-W."/>
            <person name="Miosga T."/>
            <person name="Moestl D."/>
            <person name="Mueller-Auer S."/>
            <person name="Nentwich U."/>
            <person name="Obermaier B."/>
            <person name="Piravandi E."/>
            <person name="Pohl T.M."/>
            <person name="Portetelle D."/>
            <person name="Purnelle B."/>
            <person name="Rechmann S."/>
            <person name="Rieger M."/>
            <person name="Rinke M."/>
            <person name="Rose M."/>
            <person name="Scharfe M."/>
            <person name="Scherens B."/>
            <person name="Scholler P."/>
            <person name="Schwager C."/>
            <person name="Schwarz S."/>
            <person name="Underwood A.P."/>
            <person name="Urrestarazu L.A."/>
            <person name="Vandenbol M."/>
            <person name="Verhasselt P."/>
            <person name="Vierendeels F."/>
            <person name="Voet M."/>
            <person name="Volckaert G."/>
            <person name="Voss H."/>
            <person name="Wambutt R."/>
            <person name="Wedler E."/>
            <person name="Wedler H."/>
            <person name="Zimmermann F.K."/>
            <person name="Zollner A."/>
            <person name="Hani J."/>
            <person name="Hoheisel J.D."/>
        </authorList>
    </citation>
    <scope>NUCLEOTIDE SEQUENCE [LARGE SCALE GENOMIC DNA]</scope>
    <source>
        <strain>ATCC 204508 / S288c</strain>
    </source>
</reference>
<reference key="3">
    <citation type="journal article" date="2014" name="G3 (Bethesda)">
        <title>The reference genome sequence of Saccharomyces cerevisiae: Then and now.</title>
        <authorList>
            <person name="Engel S.R."/>
            <person name="Dietrich F.S."/>
            <person name="Fisk D.G."/>
            <person name="Binkley G."/>
            <person name="Balakrishnan R."/>
            <person name="Costanzo M.C."/>
            <person name="Dwight S.S."/>
            <person name="Hitz B.C."/>
            <person name="Karra K."/>
            <person name="Nash R.S."/>
            <person name="Weng S."/>
            <person name="Wong E.D."/>
            <person name="Lloyd P."/>
            <person name="Skrzypek M.S."/>
            <person name="Miyasato S.R."/>
            <person name="Simison M."/>
            <person name="Cherry J.M."/>
        </authorList>
    </citation>
    <scope>GENOME REANNOTATION</scope>
    <source>
        <strain>ATCC 204508 / S288c</strain>
    </source>
</reference>
<reference key="4">
    <citation type="journal article" date="2007" name="Genome Res.">
        <title>Approaching a complete repository of sequence-verified protein-encoding clones for Saccharomyces cerevisiae.</title>
        <authorList>
            <person name="Hu Y."/>
            <person name="Rolfs A."/>
            <person name="Bhullar B."/>
            <person name="Murthy T.V.S."/>
            <person name="Zhu C."/>
            <person name="Berger M.F."/>
            <person name="Camargo A.A."/>
            <person name="Kelley F."/>
            <person name="McCarron S."/>
            <person name="Jepson D."/>
            <person name="Richardson A."/>
            <person name="Raphael J."/>
            <person name="Moreira D."/>
            <person name="Taycher E."/>
            <person name="Zuo D."/>
            <person name="Mohr S."/>
            <person name="Kane M.F."/>
            <person name="Williamson J."/>
            <person name="Simpson A.J.G."/>
            <person name="Bulyk M.L."/>
            <person name="Harlow E."/>
            <person name="Marsischky G."/>
            <person name="Kolodner R.D."/>
            <person name="LaBaer J."/>
        </authorList>
    </citation>
    <scope>NUCLEOTIDE SEQUENCE [GENOMIC DNA]</scope>
    <source>
        <strain>ATCC 204508 / S288c</strain>
    </source>
</reference>
<reference key="5">
    <citation type="journal article" date="2002" name="Genetics">
        <title>Sls1p is a membrane-bound regulator of transcription-coupled processes involved in Saccharomyces cerevisiae mitochondrial gene expression.</title>
        <authorList>
            <person name="Bryan A.C."/>
            <person name="Rodeheffer M.S."/>
            <person name="Wearn C.M."/>
            <person name="Shadel G.S."/>
        </authorList>
    </citation>
    <scope>FUNCTION</scope>
</reference>
<reference key="6">
    <citation type="journal article" date="2003" name="Nature">
        <title>Global analysis of protein expression in yeast.</title>
        <authorList>
            <person name="Ghaemmaghami S."/>
            <person name="Huh W.-K."/>
            <person name="Bower K."/>
            <person name="Howson R.W."/>
            <person name="Belle A."/>
            <person name="Dephoure N."/>
            <person name="O'Shea E.K."/>
            <person name="Weissman J.S."/>
        </authorList>
    </citation>
    <scope>LEVEL OF PROTEIN EXPRESSION [LARGE SCALE ANALYSIS]</scope>
</reference>
<protein>
    <recommendedName>
        <fullName>Sigma-like sequence protein 1, mitochondrial</fullName>
        <shortName>Protein SLS1</shortName>
    </recommendedName>
</protein>
<name>SLS1_YEAST</name>
<comment type="function">
    <text evidence="3 5">Involved in aerobic respiration where it is required for assembly of respiratory chain enzyme complexes III and IV. Also has a role in mitochondrial gene expression. May be part of a mitochondrial membrane-associated RNA-shuttling system, delivering NAM1-associated transcripts to the translation machinery.</text>
</comment>
<comment type="interaction">
    <interactant intactId="EBI-17364">
        <id>P42900</id>
    </interactant>
    <interactant intactId="EBI-11823">
        <id>P10849</id>
        <label>MTF2</label>
    </interactant>
    <organismsDiffer>false</organismsDiffer>
    <experiments>4</experiments>
</comment>
<comment type="subcellular location">
    <subcellularLocation>
        <location evidence="5">Mitochondrion inner membrane</location>
    </subcellularLocation>
</comment>
<comment type="miscellaneous">
    <text evidence="4">Present with 3430 molecules/cell in log phase SD medium.</text>
</comment>
<comment type="similarity">
    <text evidence="6">Belongs to the SLS1 family.</text>
</comment>
<evidence type="ECO:0000255" key="1"/>
<evidence type="ECO:0000256" key="2">
    <source>
        <dbReference type="SAM" id="MobiDB-lite"/>
    </source>
</evidence>
<evidence type="ECO:0000269" key="3">
    <source>
    </source>
</evidence>
<evidence type="ECO:0000269" key="4">
    <source>
    </source>
</evidence>
<evidence type="ECO:0000269" key="5">
    <source>
    </source>
</evidence>
<evidence type="ECO:0000305" key="6"/>
<feature type="transit peptide" description="Mitochondrion" evidence="1">
    <location>
        <begin position="1"/>
        <end status="unknown"/>
    </location>
</feature>
<feature type="chain" id="PRO_0000022360" description="Sigma-like sequence protein 1, mitochondrial">
    <location>
        <begin status="unknown"/>
        <end position="643"/>
    </location>
</feature>
<feature type="region of interest" description="Disordered" evidence="2">
    <location>
        <begin position="43"/>
        <end position="72"/>
    </location>
</feature>
<feature type="compositionally biased region" description="Basic residues" evidence="2">
    <location>
        <begin position="55"/>
        <end position="65"/>
    </location>
</feature>
<feature type="sequence conflict" description="In Ref. 4; AAT92921." evidence="6" ref="4">
    <original>A</original>
    <variation>V</variation>
    <location>
        <position position="103"/>
    </location>
</feature>
<accession>P42900</accession>
<accession>D6VYD4</accession>
<accession>Q6B228</accession>
<sequence>MWKFNKKLARLTYRLYSSSGPSSPLHGKKKLPQNLKFVVLNPTQSGLVKNDQKQPRHRPSKKRSHKETGDNNLDFGSKLLVFEKQNSLDSALNSIRLKKPTSASLPSLEYNALLQSLTSSYNRYQLREFISTHQPDSSSHLTHWKKSKLSQYIIEKIWNCQPISTPTTPTGIKSTSLTFQFDSPREIFLLLITQNGKILTNFNKLGLTFIISIQDNELTVKGSPSLLKYAEISLNKIWSNITHENVRMYSLMPSKDVINLIQKETHTFFEYLPDLQMYKISALSTKKISMAKVFLLNAVASNPNTTQHHHTIASPALKTELYPFNNTLENLDWLNKSQDWARLQSVVPKNCTDLMTPTENATPELTDAQVSQFESSLSKNIPSLSPSDSISQSLSITLGHSLQSASFSSIFQPLIHKSFISKLLNLPMYKESSSSAVPVPVPLDQHLITNAHQSFIQLNFTPVPPTSGSSSSPFLQIWFEIDEFDNIVTTSMRPLLKLQENSVILRTPQCQTDYKITSDYIQDLLPDFDQTNPDAWLSEQKGLQEFLLKSHWKLNKYQNLMKKINISLPDNLIQQYQLTDVLTHRVLNLRFPTNTAQDDKYIIQYSDISRGFLNNGSYRQLDFINVNPSETSLKTFINDVLSF</sequence>
<gene>
    <name type="primary">SLS1</name>
    <name type="ordered locus">YLR139C</name>
    <name type="ORF">L3162</name>
</gene>
<proteinExistence type="evidence at protein level"/>